<dbReference type="EMBL" id="AE005674">
    <property type="protein sequence ID" value="AAN41756.1"/>
    <property type="molecule type" value="Genomic_DNA"/>
</dbReference>
<dbReference type="EMBL" id="AE014073">
    <property type="protein sequence ID" value="AAP15637.1"/>
    <property type="molecule type" value="Genomic_DNA"/>
</dbReference>
<dbReference type="RefSeq" id="NP_706049.1">
    <property type="nucleotide sequence ID" value="NC_004337.2"/>
</dbReference>
<dbReference type="STRING" id="198214.SF0091"/>
<dbReference type="PaxDb" id="198214-SF0091"/>
<dbReference type="GeneID" id="1024541"/>
<dbReference type="KEGG" id="sfl:SF0091"/>
<dbReference type="KEGG" id="sfx:S0093"/>
<dbReference type="PATRIC" id="fig|198214.7.peg.106"/>
<dbReference type="HOGENOM" id="CLU_037850_3_2_6"/>
<dbReference type="Proteomes" id="UP000001006">
    <property type="component" value="Chromosome"/>
</dbReference>
<dbReference type="Proteomes" id="UP000002673">
    <property type="component" value="Chromosome"/>
</dbReference>
<dbReference type="GO" id="GO:0032153">
    <property type="term" value="C:cell division site"/>
    <property type="evidence" value="ECO:0007669"/>
    <property type="project" value="UniProtKB-UniRule"/>
</dbReference>
<dbReference type="GO" id="GO:0009898">
    <property type="term" value="C:cytoplasmic side of plasma membrane"/>
    <property type="evidence" value="ECO:0007669"/>
    <property type="project" value="UniProtKB-UniRule"/>
</dbReference>
<dbReference type="GO" id="GO:0043093">
    <property type="term" value="P:FtsZ-dependent cytokinesis"/>
    <property type="evidence" value="ECO:0007669"/>
    <property type="project" value="UniProtKB-UniRule"/>
</dbReference>
<dbReference type="CDD" id="cd24048">
    <property type="entry name" value="ASKHA_NBD_FtsA"/>
    <property type="match status" value="1"/>
</dbReference>
<dbReference type="FunFam" id="3.30.1490.110:FF:000001">
    <property type="entry name" value="Cell division protein FtsA"/>
    <property type="match status" value="1"/>
</dbReference>
<dbReference type="FunFam" id="3.30.420.40:FF:000030">
    <property type="entry name" value="Cell division protein FtsA"/>
    <property type="match status" value="1"/>
</dbReference>
<dbReference type="Gene3D" id="3.30.1490.110">
    <property type="match status" value="1"/>
</dbReference>
<dbReference type="Gene3D" id="3.30.420.40">
    <property type="match status" value="1"/>
</dbReference>
<dbReference type="HAMAP" id="MF_02033">
    <property type="entry name" value="FtsA"/>
    <property type="match status" value="1"/>
</dbReference>
<dbReference type="InterPro" id="IPR043129">
    <property type="entry name" value="ATPase_NBD"/>
</dbReference>
<dbReference type="InterPro" id="IPR020823">
    <property type="entry name" value="Cell_div_FtsA"/>
</dbReference>
<dbReference type="InterPro" id="IPR050696">
    <property type="entry name" value="FtsA/MreB"/>
</dbReference>
<dbReference type="InterPro" id="IPR003494">
    <property type="entry name" value="SHS2_FtsA"/>
</dbReference>
<dbReference type="NCBIfam" id="TIGR01174">
    <property type="entry name" value="ftsA"/>
    <property type="match status" value="1"/>
</dbReference>
<dbReference type="NCBIfam" id="NF007009">
    <property type="entry name" value="PRK09472.1"/>
    <property type="match status" value="1"/>
</dbReference>
<dbReference type="PANTHER" id="PTHR32432:SF4">
    <property type="entry name" value="CELL DIVISION PROTEIN FTSA"/>
    <property type="match status" value="1"/>
</dbReference>
<dbReference type="PANTHER" id="PTHR32432">
    <property type="entry name" value="CELL DIVISION PROTEIN FTSA-RELATED"/>
    <property type="match status" value="1"/>
</dbReference>
<dbReference type="Pfam" id="PF14450">
    <property type="entry name" value="FtsA"/>
    <property type="match status" value="1"/>
</dbReference>
<dbReference type="Pfam" id="PF02491">
    <property type="entry name" value="SHS2_FTSA"/>
    <property type="match status" value="1"/>
</dbReference>
<dbReference type="PIRSF" id="PIRSF003101">
    <property type="entry name" value="FtsA"/>
    <property type="match status" value="1"/>
</dbReference>
<dbReference type="SMART" id="SM00842">
    <property type="entry name" value="FtsA"/>
    <property type="match status" value="1"/>
</dbReference>
<dbReference type="SUPFAM" id="SSF53067">
    <property type="entry name" value="Actin-like ATPase domain"/>
    <property type="match status" value="2"/>
</dbReference>
<sequence length="439" mass="47373">MIKATDRKLVVGLEIGTAKVAALVGEVLPDGMVNIIGVGSCPSRGMDKGGVNDLESVVKCVQRAIDQAELMADCQISSVYLALSGKHISCQNEIGMVPISEEEVTQEDVENVVHTAKSVRVRDEHRVLHVIPQEYAIDYQEGIKNPVGLSGVRMQAKVHLITCHNDMAKNIVKAVERCGLKVDQLIFAGLASSYSVLTEDERELGVCVVDIGGGTMDIAVYTGGALRHTKVIPYAGNVVTSDIAYAFGTPPSDAEAIKVRHGCALGSIVGKDESVEVPSVGGRPPRSLQRQTLAEVIEPRYTELLNLVNEEILQLQEKLRQQGVKHHLAAGIVLTGGAAQIEGLAACAQRVFHTQVRIGAPLNITGLTDYAQEPYYSTAVGLLHYGKESHLNGEAEVEKRVTASVGSWIKRLNSWLRKEFDANGLINGDRPIRBCEECA</sequence>
<proteinExistence type="inferred from homology"/>
<gene>
    <name evidence="1" type="primary">ftsA</name>
    <name type="ordered locus">SF0091</name>
    <name type="ordered locus">S0093</name>
</gene>
<feature type="chain" id="PRO_0000062745" description="Cell division protein FtsA">
    <location>
        <begin position="1"/>
        <end position="439"/>
    </location>
</feature>
<keyword id="KW-0131">Cell cycle</keyword>
<keyword id="KW-0132">Cell division</keyword>
<keyword id="KW-0997">Cell inner membrane</keyword>
<keyword id="KW-1003">Cell membrane</keyword>
<keyword id="KW-0472">Membrane</keyword>
<keyword id="KW-1185">Reference proteome</keyword>
<reference key="1">
    <citation type="journal article" date="2002" name="Nucleic Acids Res.">
        <title>Genome sequence of Shigella flexneri 2a: insights into pathogenicity through comparison with genomes of Escherichia coli K12 and O157.</title>
        <authorList>
            <person name="Jin Q."/>
            <person name="Yuan Z."/>
            <person name="Xu J."/>
            <person name="Wang Y."/>
            <person name="Shen Y."/>
            <person name="Lu W."/>
            <person name="Wang J."/>
            <person name="Liu H."/>
            <person name="Yang J."/>
            <person name="Yang F."/>
            <person name="Zhang X."/>
            <person name="Zhang J."/>
            <person name="Yang G."/>
            <person name="Wu H."/>
            <person name="Qu D."/>
            <person name="Dong J."/>
            <person name="Sun L."/>
            <person name="Xue Y."/>
            <person name="Zhao A."/>
            <person name="Gao Y."/>
            <person name="Zhu J."/>
            <person name="Kan B."/>
            <person name="Ding K."/>
            <person name="Chen S."/>
            <person name="Cheng H."/>
            <person name="Yao Z."/>
            <person name="He B."/>
            <person name="Chen R."/>
            <person name="Ma D."/>
            <person name="Qiang B."/>
            <person name="Wen Y."/>
            <person name="Hou Y."/>
            <person name="Yu J."/>
        </authorList>
    </citation>
    <scope>NUCLEOTIDE SEQUENCE [LARGE SCALE GENOMIC DNA]</scope>
    <source>
        <strain>301 / Serotype 2a</strain>
    </source>
</reference>
<reference key="2">
    <citation type="journal article" date="2003" name="Infect. Immun.">
        <title>Complete genome sequence and comparative genomics of Shigella flexneri serotype 2a strain 2457T.</title>
        <authorList>
            <person name="Wei J."/>
            <person name="Goldberg M.B."/>
            <person name="Burland V."/>
            <person name="Venkatesan M.M."/>
            <person name="Deng W."/>
            <person name="Fournier G."/>
            <person name="Mayhew G.F."/>
            <person name="Plunkett G. III"/>
            <person name="Rose D.J."/>
            <person name="Darling A."/>
            <person name="Mau B."/>
            <person name="Perna N.T."/>
            <person name="Payne S.M."/>
            <person name="Runyen-Janecky L.J."/>
            <person name="Zhou S."/>
            <person name="Schwartz D.C."/>
            <person name="Blattner F.R."/>
        </authorList>
    </citation>
    <scope>NUCLEOTIDE SEQUENCE [LARGE SCALE GENOMIC DNA]</scope>
    <source>
        <strain>ATCC 700930 / 2457T / Serotype 2a</strain>
    </source>
</reference>
<evidence type="ECO:0000255" key="1">
    <source>
        <dbReference type="HAMAP-Rule" id="MF_02033"/>
    </source>
</evidence>
<name>FTSA_SHIFL</name>
<protein>
    <recommendedName>
        <fullName evidence="1">Cell division protein FtsA</fullName>
    </recommendedName>
</protein>
<comment type="function">
    <text evidence="1">Cell division protein that is involved in the assembly of the Z ring. May serve as a membrane anchor for the Z ring.</text>
</comment>
<comment type="subunit">
    <text evidence="1">Self-interacts. Interacts with FtsZ.</text>
</comment>
<comment type="subcellular location">
    <subcellularLocation>
        <location evidence="1">Cell inner membrane</location>
        <topology evidence="1">Peripheral membrane protein</topology>
        <orientation evidence="1">Cytoplasmic side</orientation>
    </subcellularLocation>
    <text evidence="1">Localizes to the Z ring in an FtsZ-dependent manner. Targeted to the membrane through a conserved C-terminal amphipathic helix.</text>
</comment>
<comment type="similarity">
    <text evidence="1">Belongs to the FtsA/MreB family.</text>
</comment>
<accession>P0ABH3</accession>
<accession>P06137</accession>
<accession>Q47229</accession>
<organism>
    <name type="scientific">Shigella flexneri</name>
    <dbReference type="NCBI Taxonomy" id="623"/>
    <lineage>
        <taxon>Bacteria</taxon>
        <taxon>Pseudomonadati</taxon>
        <taxon>Pseudomonadota</taxon>
        <taxon>Gammaproteobacteria</taxon>
        <taxon>Enterobacterales</taxon>
        <taxon>Enterobacteriaceae</taxon>
        <taxon>Shigella</taxon>
    </lineage>
</organism>